<protein>
    <recommendedName>
        <fullName evidence="1">Phenylalanine--tRNA ligase beta subunit</fullName>
        <ecNumber evidence="1">6.1.1.20</ecNumber>
    </recommendedName>
    <alternativeName>
        <fullName evidence="1">Phenylalanyl-tRNA synthetase beta subunit</fullName>
        <shortName evidence="1">PheRS</shortName>
    </alternativeName>
</protein>
<feature type="chain" id="PRO_0000126886" description="Phenylalanine--tRNA ligase beta subunit">
    <location>
        <begin position="1"/>
        <end position="790"/>
    </location>
</feature>
<feature type="domain" description="tRNA-binding" evidence="1">
    <location>
        <begin position="40"/>
        <end position="149"/>
    </location>
</feature>
<feature type="domain" description="B5" evidence="1">
    <location>
        <begin position="402"/>
        <end position="479"/>
    </location>
</feature>
<feature type="domain" description="FDX-ACB" evidence="1">
    <location>
        <begin position="698"/>
        <end position="789"/>
    </location>
</feature>
<feature type="binding site" evidence="1">
    <location>
        <position position="457"/>
    </location>
    <ligand>
        <name>Mg(2+)</name>
        <dbReference type="ChEBI" id="CHEBI:18420"/>
        <note>shared with alpha subunit</note>
    </ligand>
</feature>
<feature type="binding site" evidence="1">
    <location>
        <position position="463"/>
    </location>
    <ligand>
        <name>Mg(2+)</name>
        <dbReference type="ChEBI" id="CHEBI:18420"/>
        <note>shared with alpha subunit</note>
    </ligand>
</feature>
<feature type="binding site" evidence="1">
    <location>
        <position position="466"/>
    </location>
    <ligand>
        <name>Mg(2+)</name>
        <dbReference type="ChEBI" id="CHEBI:18420"/>
        <note>shared with alpha subunit</note>
    </ligand>
</feature>
<feature type="binding site" evidence="1">
    <location>
        <position position="467"/>
    </location>
    <ligand>
        <name>Mg(2+)</name>
        <dbReference type="ChEBI" id="CHEBI:18420"/>
        <note>shared with alpha subunit</note>
    </ligand>
</feature>
<accession>Q5NG54</accession>
<name>SYFB_FRATT</name>
<evidence type="ECO:0000255" key="1">
    <source>
        <dbReference type="HAMAP-Rule" id="MF_00283"/>
    </source>
</evidence>
<proteinExistence type="inferred from homology"/>
<organism>
    <name type="scientific">Francisella tularensis subsp. tularensis (strain SCHU S4 / Schu 4)</name>
    <dbReference type="NCBI Taxonomy" id="177416"/>
    <lineage>
        <taxon>Bacteria</taxon>
        <taxon>Pseudomonadati</taxon>
        <taxon>Pseudomonadota</taxon>
        <taxon>Gammaproteobacteria</taxon>
        <taxon>Thiotrichales</taxon>
        <taxon>Francisellaceae</taxon>
        <taxon>Francisella</taxon>
    </lineage>
</organism>
<gene>
    <name evidence="1" type="primary">pheT</name>
    <name type="ordered locus">FTT_1002c</name>
</gene>
<keyword id="KW-0030">Aminoacyl-tRNA synthetase</keyword>
<keyword id="KW-0067">ATP-binding</keyword>
<keyword id="KW-0963">Cytoplasm</keyword>
<keyword id="KW-0436">Ligase</keyword>
<keyword id="KW-0460">Magnesium</keyword>
<keyword id="KW-0479">Metal-binding</keyword>
<keyword id="KW-0547">Nucleotide-binding</keyword>
<keyword id="KW-0648">Protein biosynthesis</keyword>
<keyword id="KW-1185">Reference proteome</keyword>
<keyword id="KW-0694">RNA-binding</keyword>
<keyword id="KW-0820">tRNA-binding</keyword>
<reference key="1">
    <citation type="journal article" date="2005" name="Nat. Genet.">
        <title>The complete genome sequence of Francisella tularensis, the causative agent of tularemia.</title>
        <authorList>
            <person name="Larsson P."/>
            <person name="Oyston P.C.F."/>
            <person name="Chain P."/>
            <person name="Chu M.C."/>
            <person name="Duffield M."/>
            <person name="Fuxelius H.-H."/>
            <person name="Garcia E."/>
            <person name="Haelltorp G."/>
            <person name="Johansson D."/>
            <person name="Isherwood K.E."/>
            <person name="Karp P.D."/>
            <person name="Larsson E."/>
            <person name="Liu Y."/>
            <person name="Michell S."/>
            <person name="Prior J."/>
            <person name="Prior R."/>
            <person name="Malfatti S."/>
            <person name="Sjoestedt A."/>
            <person name="Svensson K."/>
            <person name="Thompson N."/>
            <person name="Vergez L."/>
            <person name="Wagg J.K."/>
            <person name="Wren B.W."/>
            <person name="Lindler L.E."/>
            <person name="Andersson S.G.E."/>
            <person name="Forsman M."/>
            <person name="Titball R.W."/>
        </authorList>
    </citation>
    <scope>NUCLEOTIDE SEQUENCE [LARGE SCALE GENOMIC DNA]</scope>
    <source>
        <strain>SCHU S4 / Schu 4</strain>
    </source>
</reference>
<sequence>MKFSHNWLNEYLGDTQDSQNLADTLTLAGLEVDAIEPVVAEKVSGVVVGQIKTINKHPDADKLNVCSVDAGEDELLTIVCGASNIYEGMKAPVAKIGAVLPGNFKIKKSKLRGQESFGMMCSEEELGLAEKADGLMDLPIDAPVGTDINKYLNLDDNIIEVDLTPNRADCLSVYGIAREVSALTKTELKNLEIPEPKVVIDDTKEVNITATDACHAYYGCIIKNVNNKIQTPLWMVEKLRRSGIGSISFFVDVTNYVMLLTGQPMHAFDLDKLEGRINVRYAKNNEELTLLDQTQVKLDCDTLIIADDKKALAIAGVMGGLDSSITDSTTNIFLESAFFVPEKIAGKARKYNLHTDSSHRFERGVDPQLAKKAMKIAIRLINEIAGGEVAPIHGAEDLANLNKQIKINLSIKKLNHVLGTNFDIEYVTEVLKALHMDVATSFDGNCIEVIPPSYRFDLEIPEDLIEEVARIYGYSKLPETMPKYAAAKTNISETYQSLDTLNMRLIDRGYHETINYSFIDPKFDEFFFADRGIAIQNPISQDLSIMRQSLIPGLINTFKANTSRQQNRVRIFEKGACFKLQDNQRIQFDRIAGLAYGELLNINWSNSKKVDFFDVKADVEALCNDLTSLSFEVCNDINWLHLGQSAYILANGNKIGVIGVIHPTVLKNFQIKAKAPIVFELDLDVLIKRQIPNFTKISKYPSVSRDISFLVDKSVLAGDIIKAIKALNINILKDVSIFDIYESQDSDRKSIALNMLFQDNLQTLDDKVIVESIDKVLEALKTKFNIEQRV</sequence>
<dbReference type="EC" id="6.1.1.20" evidence="1"/>
<dbReference type="EMBL" id="AJ749949">
    <property type="protein sequence ID" value="CAG45635.1"/>
    <property type="molecule type" value="Genomic_DNA"/>
</dbReference>
<dbReference type="RefSeq" id="WP_003021090.1">
    <property type="nucleotide sequence ID" value="NC_006570.2"/>
</dbReference>
<dbReference type="RefSeq" id="YP_169988.1">
    <property type="nucleotide sequence ID" value="NC_006570.2"/>
</dbReference>
<dbReference type="SMR" id="Q5NG54"/>
<dbReference type="STRING" id="177416.FTT_1002c"/>
<dbReference type="DNASU" id="3191133"/>
<dbReference type="EnsemblBacteria" id="CAG45635">
    <property type="protein sequence ID" value="CAG45635"/>
    <property type="gene ID" value="FTT_1002c"/>
</dbReference>
<dbReference type="KEGG" id="ftu:FTT_1002c"/>
<dbReference type="eggNOG" id="COG0072">
    <property type="taxonomic scope" value="Bacteria"/>
</dbReference>
<dbReference type="eggNOG" id="COG0073">
    <property type="taxonomic scope" value="Bacteria"/>
</dbReference>
<dbReference type="OrthoDB" id="9805455at2"/>
<dbReference type="Proteomes" id="UP000001174">
    <property type="component" value="Chromosome"/>
</dbReference>
<dbReference type="GO" id="GO:0009328">
    <property type="term" value="C:phenylalanine-tRNA ligase complex"/>
    <property type="evidence" value="ECO:0007669"/>
    <property type="project" value="TreeGrafter"/>
</dbReference>
<dbReference type="GO" id="GO:0005524">
    <property type="term" value="F:ATP binding"/>
    <property type="evidence" value="ECO:0007669"/>
    <property type="project" value="UniProtKB-UniRule"/>
</dbReference>
<dbReference type="GO" id="GO:0000287">
    <property type="term" value="F:magnesium ion binding"/>
    <property type="evidence" value="ECO:0007669"/>
    <property type="project" value="UniProtKB-UniRule"/>
</dbReference>
<dbReference type="GO" id="GO:0004826">
    <property type="term" value="F:phenylalanine-tRNA ligase activity"/>
    <property type="evidence" value="ECO:0007669"/>
    <property type="project" value="UniProtKB-UniRule"/>
</dbReference>
<dbReference type="GO" id="GO:0000049">
    <property type="term" value="F:tRNA binding"/>
    <property type="evidence" value="ECO:0007669"/>
    <property type="project" value="UniProtKB-KW"/>
</dbReference>
<dbReference type="GO" id="GO:0006432">
    <property type="term" value="P:phenylalanyl-tRNA aminoacylation"/>
    <property type="evidence" value="ECO:0007669"/>
    <property type="project" value="UniProtKB-UniRule"/>
</dbReference>
<dbReference type="CDD" id="cd00769">
    <property type="entry name" value="PheRS_beta_core"/>
    <property type="match status" value="1"/>
</dbReference>
<dbReference type="CDD" id="cd02796">
    <property type="entry name" value="tRNA_bind_bactPheRS"/>
    <property type="match status" value="1"/>
</dbReference>
<dbReference type="FunFam" id="2.40.50.140:FF:000045">
    <property type="entry name" value="Phenylalanine--tRNA ligase beta subunit"/>
    <property type="match status" value="1"/>
</dbReference>
<dbReference type="FunFam" id="3.50.40.10:FF:000001">
    <property type="entry name" value="Phenylalanine--tRNA ligase beta subunit"/>
    <property type="match status" value="1"/>
</dbReference>
<dbReference type="Gene3D" id="3.30.56.10">
    <property type="match status" value="2"/>
</dbReference>
<dbReference type="Gene3D" id="3.30.930.10">
    <property type="entry name" value="Bira Bifunctional Protein, Domain 2"/>
    <property type="match status" value="1"/>
</dbReference>
<dbReference type="Gene3D" id="3.30.70.380">
    <property type="entry name" value="Ferrodoxin-fold anticodon-binding domain"/>
    <property type="match status" value="1"/>
</dbReference>
<dbReference type="Gene3D" id="2.40.50.140">
    <property type="entry name" value="Nucleic acid-binding proteins"/>
    <property type="match status" value="1"/>
</dbReference>
<dbReference type="Gene3D" id="3.50.40.10">
    <property type="entry name" value="Phenylalanyl-trna Synthetase, Chain B, domain 3"/>
    <property type="match status" value="1"/>
</dbReference>
<dbReference type="HAMAP" id="MF_00283">
    <property type="entry name" value="Phe_tRNA_synth_beta1"/>
    <property type="match status" value="1"/>
</dbReference>
<dbReference type="InterPro" id="IPR045864">
    <property type="entry name" value="aa-tRNA-synth_II/BPL/LPL"/>
</dbReference>
<dbReference type="InterPro" id="IPR005146">
    <property type="entry name" value="B3/B4_tRNA-bd"/>
</dbReference>
<dbReference type="InterPro" id="IPR009061">
    <property type="entry name" value="DNA-bd_dom_put_sf"/>
</dbReference>
<dbReference type="InterPro" id="IPR005121">
    <property type="entry name" value="Fdx_antiC-bd"/>
</dbReference>
<dbReference type="InterPro" id="IPR036690">
    <property type="entry name" value="Fdx_antiC-bd_sf"/>
</dbReference>
<dbReference type="InterPro" id="IPR012340">
    <property type="entry name" value="NA-bd_OB-fold"/>
</dbReference>
<dbReference type="InterPro" id="IPR045060">
    <property type="entry name" value="Phe-tRNA-ligase_IIc_bsu"/>
</dbReference>
<dbReference type="InterPro" id="IPR004532">
    <property type="entry name" value="Phe-tRNA-ligase_IIc_bsu_bact"/>
</dbReference>
<dbReference type="InterPro" id="IPR020825">
    <property type="entry name" value="Phe-tRNA_synthase-like_B3/B4"/>
</dbReference>
<dbReference type="InterPro" id="IPR041616">
    <property type="entry name" value="PheRS_beta_core"/>
</dbReference>
<dbReference type="InterPro" id="IPR002547">
    <property type="entry name" value="tRNA-bd_dom"/>
</dbReference>
<dbReference type="InterPro" id="IPR033714">
    <property type="entry name" value="tRNA_bind_bactPheRS"/>
</dbReference>
<dbReference type="InterPro" id="IPR005147">
    <property type="entry name" value="tRNA_synthase_B5-dom"/>
</dbReference>
<dbReference type="NCBIfam" id="TIGR00472">
    <property type="entry name" value="pheT_bact"/>
    <property type="match status" value="1"/>
</dbReference>
<dbReference type="NCBIfam" id="NF045760">
    <property type="entry name" value="YtpR"/>
    <property type="match status" value="1"/>
</dbReference>
<dbReference type="PANTHER" id="PTHR10947:SF0">
    <property type="entry name" value="PHENYLALANINE--TRNA LIGASE BETA SUBUNIT"/>
    <property type="match status" value="1"/>
</dbReference>
<dbReference type="PANTHER" id="PTHR10947">
    <property type="entry name" value="PHENYLALANYL-TRNA SYNTHETASE BETA CHAIN AND LEUCINE-RICH REPEAT-CONTAINING PROTEIN 47"/>
    <property type="match status" value="1"/>
</dbReference>
<dbReference type="Pfam" id="PF03483">
    <property type="entry name" value="B3_4"/>
    <property type="match status" value="1"/>
</dbReference>
<dbReference type="Pfam" id="PF03484">
    <property type="entry name" value="B5"/>
    <property type="match status" value="1"/>
</dbReference>
<dbReference type="Pfam" id="PF03147">
    <property type="entry name" value="FDX-ACB"/>
    <property type="match status" value="1"/>
</dbReference>
<dbReference type="Pfam" id="PF01588">
    <property type="entry name" value="tRNA_bind"/>
    <property type="match status" value="1"/>
</dbReference>
<dbReference type="Pfam" id="PF17759">
    <property type="entry name" value="tRNA_synthFbeta"/>
    <property type="match status" value="1"/>
</dbReference>
<dbReference type="SMART" id="SM00873">
    <property type="entry name" value="B3_4"/>
    <property type="match status" value="1"/>
</dbReference>
<dbReference type="SMART" id="SM00874">
    <property type="entry name" value="B5"/>
    <property type="match status" value="1"/>
</dbReference>
<dbReference type="SMART" id="SM00896">
    <property type="entry name" value="FDX-ACB"/>
    <property type="match status" value="1"/>
</dbReference>
<dbReference type="SUPFAM" id="SSF54991">
    <property type="entry name" value="Anticodon-binding domain of PheRS"/>
    <property type="match status" value="1"/>
</dbReference>
<dbReference type="SUPFAM" id="SSF55681">
    <property type="entry name" value="Class II aaRS and biotin synthetases"/>
    <property type="match status" value="1"/>
</dbReference>
<dbReference type="SUPFAM" id="SSF50249">
    <property type="entry name" value="Nucleic acid-binding proteins"/>
    <property type="match status" value="1"/>
</dbReference>
<dbReference type="SUPFAM" id="SSF56037">
    <property type="entry name" value="PheT/TilS domain"/>
    <property type="match status" value="1"/>
</dbReference>
<dbReference type="SUPFAM" id="SSF46955">
    <property type="entry name" value="Putative DNA-binding domain"/>
    <property type="match status" value="1"/>
</dbReference>
<dbReference type="PROSITE" id="PS51483">
    <property type="entry name" value="B5"/>
    <property type="match status" value="1"/>
</dbReference>
<dbReference type="PROSITE" id="PS51447">
    <property type="entry name" value="FDX_ACB"/>
    <property type="match status" value="1"/>
</dbReference>
<dbReference type="PROSITE" id="PS50886">
    <property type="entry name" value="TRBD"/>
    <property type="match status" value="1"/>
</dbReference>
<comment type="catalytic activity">
    <reaction evidence="1">
        <text>tRNA(Phe) + L-phenylalanine + ATP = L-phenylalanyl-tRNA(Phe) + AMP + diphosphate + H(+)</text>
        <dbReference type="Rhea" id="RHEA:19413"/>
        <dbReference type="Rhea" id="RHEA-COMP:9668"/>
        <dbReference type="Rhea" id="RHEA-COMP:9699"/>
        <dbReference type="ChEBI" id="CHEBI:15378"/>
        <dbReference type="ChEBI" id="CHEBI:30616"/>
        <dbReference type="ChEBI" id="CHEBI:33019"/>
        <dbReference type="ChEBI" id="CHEBI:58095"/>
        <dbReference type="ChEBI" id="CHEBI:78442"/>
        <dbReference type="ChEBI" id="CHEBI:78531"/>
        <dbReference type="ChEBI" id="CHEBI:456215"/>
        <dbReference type="EC" id="6.1.1.20"/>
    </reaction>
</comment>
<comment type="cofactor">
    <cofactor evidence="1">
        <name>Mg(2+)</name>
        <dbReference type="ChEBI" id="CHEBI:18420"/>
    </cofactor>
    <text evidence="1">Binds 2 magnesium ions per tetramer.</text>
</comment>
<comment type="subunit">
    <text evidence="1">Tetramer of two alpha and two beta subunits.</text>
</comment>
<comment type="subcellular location">
    <subcellularLocation>
        <location evidence="1">Cytoplasm</location>
    </subcellularLocation>
</comment>
<comment type="similarity">
    <text evidence="1">Belongs to the phenylalanyl-tRNA synthetase beta subunit family. Type 1 subfamily.</text>
</comment>